<protein>
    <recommendedName>
        <fullName evidence="7">Folate synthesis bifunctional protein, mitochondrial</fullName>
    </recommendedName>
    <domain>
        <recommendedName>
            <fullName evidence="7">6-hydroxymethyl-7,8-dihydropterin pyrophosphokinase</fullName>
            <shortName evidence="7">HPPK</shortName>
            <ecNumber evidence="1">2.7.6.3</ecNumber>
        </recommendedName>
        <alternativeName>
            <fullName>2-amino-4-hydroxy-6-hydroxymethyldihydropteridine diphosphokinase</fullName>
        </alternativeName>
        <alternativeName>
            <fullName>7,8-dihydro-6-hydroxymethylpterin-pyrophosphokinase</fullName>
        </alternativeName>
    </domain>
    <domain>
        <recommendedName>
            <fullName evidence="7">Dihydropteroate synthase</fullName>
            <shortName evidence="7">DHPS</shortName>
            <ecNumber evidence="1">2.5.1.15</ecNumber>
        </recommendedName>
    </domain>
</protein>
<accession>Q9SZV3</accession>
<accession>F4JPH1</accession>
<gene>
    <name evidence="7" type="primary">MitHPPK/DHPS</name>
    <name evidence="9" type="ordered locus">At4g30000</name>
    <name evidence="10" type="ORF">F6G3.30</name>
</gene>
<name>FOLM_ARATH</name>
<reference key="1">
    <citation type="journal article" date="1999" name="Nature">
        <title>Sequence and analysis of chromosome 4 of the plant Arabidopsis thaliana.</title>
        <authorList>
            <person name="Mayer K.F.X."/>
            <person name="Schueller C."/>
            <person name="Wambutt R."/>
            <person name="Murphy G."/>
            <person name="Volckaert G."/>
            <person name="Pohl T."/>
            <person name="Duesterhoeft A."/>
            <person name="Stiekema W."/>
            <person name="Entian K.-D."/>
            <person name="Terryn N."/>
            <person name="Harris B."/>
            <person name="Ansorge W."/>
            <person name="Brandt P."/>
            <person name="Grivell L.A."/>
            <person name="Rieger M."/>
            <person name="Weichselgartner M."/>
            <person name="de Simone V."/>
            <person name="Obermaier B."/>
            <person name="Mache R."/>
            <person name="Mueller M."/>
            <person name="Kreis M."/>
            <person name="Delseny M."/>
            <person name="Puigdomenech P."/>
            <person name="Watson M."/>
            <person name="Schmidtheini T."/>
            <person name="Reichert B."/>
            <person name="Portetelle D."/>
            <person name="Perez-Alonso M."/>
            <person name="Boutry M."/>
            <person name="Bancroft I."/>
            <person name="Vos P."/>
            <person name="Hoheisel J."/>
            <person name="Zimmermann W."/>
            <person name="Wedler H."/>
            <person name="Ridley P."/>
            <person name="Langham S.-A."/>
            <person name="McCullagh B."/>
            <person name="Bilham L."/>
            <person name="Robben J."/>
            <person name="van der Schueren J."/>
            <person name="Grymonprez B."/>
            <person name="Chuang Y.-J."/>
            <person name="Vandenbussche F."/>
            <person name="Braeken M."/>
            <person name="Weltjens I."/>
            <person name="Voet M."/>
            <person name="Bastiaens I."/>
            <person name="Aert R."/>
            <person name="Defoor E."/>
            <person name="Weitzenegger T."/>
            <person name="Bothe G."/>
            <person name="Ramsperger U."/>
            <person name="Hilbert H."/>
            <person name="Braun M."/>
            <person name="Holzer E."/>
            <person name="Brandt A."/>
            <person name="Peters S."/>
            <person name="van Staveren M."/>
            <person name="Dirkse W."/>
            <person name="Mooijman P."/>
            <person name="Klein Lankhorst R."/>
            <person name="Rose M."/>
            <person name="Hauf J."/>
            <person name="Koetter P."/>
            <person name="Berneiser S."/>
            <person name="Hempel S."/>
            <person name="Feldpausch M."/>
            <person name="Lamberth S."/>
            <person name="Van den Daele H."/>
            <person name="De Keyser A."/>
            <person name="Buysshaert C."/>
            <person name="Gielen J."/>
            <person name="Villarroel R."/>
            <person name="De Clercq R."/>
            <person name="van Montagu M."/>
            <person name="Rogers J."/>
            <person name="Cronin A."/>
            <person name="Quail M.A."/>
            <person name="Bray-Allen S."/>
            <person name="Clark L."/>
            <person name="Doggett J."/>
            <person name="Hall S."/>
            <person name="Kay M."/>
            <person name="Lennard N."/>
            <person name="McLay K."/>
            <person name="Mayes R."/>
            <person name="Pettett A."/>
            <person name="Rajandream M.A."/>
            <person name="Lyne M."/>
            <person name="Benes V."/>
            <person name="Rechmann S."/>
            <person name="Borkova D."/>
            <person name="Bloecker H."/>
            <person name="Scharfe M."/>
            <person name="Grimm M."/>
            <person name="Loehnert T.-H."/>
            <person name="Dose S."/>
            <person name="de Haan M."/>
            <person name="Maarse A.C."/>
            <person name="Schaefer M."/>
            <person name="Mueller-Auer S."/>
            <person name="Gabel C."/>
            <person name="Fuchs M."/>
            <person name="Fartmann B."/>
            <person name="Granderath K."/>
            <person name="Dauner D."/>
            <person name="Herzl A."/>
            <person name="Neumann S."/>
            <person name="Argiriou A."/>
            <person name="Vitale D."/>
            <person name="Liguori R."/>
            <person name="Piravandi E."/>
            <person name="Massenet O."/>
            <person name="Quigley F."/>
            <person name="Clabauld G."/>
            <person name="Muendlein A."/>
            <person name="Felber R."/>
            <person name="Schnabl S."/>
            <person name="Hiller R."/>
            <person name="Schmidt W."/>
            <person name="Lecharny A."/>
            <person name="Aubourg S."/>
            <person name="Chefdor F."/>
            <person name="Cooke R."/>
            <person name="Berger C."/>
            <person name="Monfort A."/>
            <person name="Casacuberta E."/>
            <person name="Gibbons T."/>
            <person name="Weber N."/>
            <person name="Vandenbol M."/>
            <person name="Bargues M."/>
            <person name="Terol J."/>
            <person name="Torres A."/>
            <person name="Perez-Perez A."/>
            <person name="Purnelle B."/>
            <person name="Bent E."/>
            <person name="Johnson S."/>
            <person name="Tacon D."/>
            <person name="Jesse T."/>
            <person name="Heijnen L."/>
            <person name="Schwarz S."/>
            <person name="Scholler P."/>
            <person name="Heber S."/>
            <person name="Francs P."/>
            <person name="Bielke C."/>
            <person name="Frishman D."/>
            <person name="Haase D."/>
            <person name="Lemcke K."/>
            <person name="Mewes H.-W."/>
            <person name="Stocker S."/>
            <person name="Zaccaria P."/>
            <person name="Bevan M."/>
            <person name="Wilson R.K."/>
            <person name="de la Bastide M."/>
            <person name="Habermann K."/>
            <person name="Parnell L."/>
            <person name="Dedhia N."/>
            <person name="Gnoj L."/>
            <person name="Schutz K."/>
            <person name="Huang E."/>
            <person name="Spiegel L."/>
            <person name="Sekhon M."/>
            <person name="Murray J."/>
            <person name="Sheet P."/>
            <person name="Cordes M."/>
            <person name="Abu-Threideh J."/>
            <person name="Stoneking T."/>
            <person name="Kalicki J."/>
            <person name="Graves T."/>
            <person name="Harmon G."/>
            <person name="Edwards J."/>
            <person name="Latreille P."/>
            <person name="Courtney L."/>
            <person name="Cloud J."/>
            <person name="Abbott A."/>
            <person name="Scott K."/>
            <person name="Johnson D."/>
            <person name="Minx P."/>
            <person name="Bentley D."/>
            <person name="Fulton B."/>
            <person name="Miller N."/>
            <person name="Greco T."/>
            <person name="Kemp K."/>
            <person name="Kramer J."/>
            <person name="Fulton L."/>
            <person name="Mardis E."/>
            <person name="Dante M."/>
            <person name="Pepin K."/>
            <person name="Hillier L.W."/>
            <person name="Nelson J."/>
            <person name="Spieth J."/>
            <person name="Ryan E."/>
            <person name="Andrews S."/>
            <person name="Geisel C."/>
            <person name="Layman D."/>
            <person name="Du H."/>
            <person name="Ali J."/>
            <person name="Berghoff A."/>
            <person name="Jones K."/>
            <person name="Drone K."/>
            <person name="Cotton M."/>
            <person name="Joshu C."/>
            <person name="Antonoiu B."/>
            <person name="Zidanic M."/>
            <person name="Strong C."/>
            <person name="Sun H."/>
            <person name="Lamar B."/>
            <person name="Yordan C."/>
            <person name="Ma P."/>
            <person name="Zhong J."/>
            <person name="Preston R."/>
            <person name="Vil D."/>
            <person name="Shekher M."/>
            <person name="Matero A."/>
            <person name="Shah R."/>
            <person name="Swaby I.K."/>
            <person name="O'Shaughnessy A."/>
            <person name="Rodriguez M."/>
            <person name="Hoffman J."/>
            <person name="Till S."/>
            <person name="Granat S."/>
            <person name="Shohdy N."/>
            <person name="Hasegawa A."/>
            <person name="Hameed A."/>
            <person name="Lodhi M."/>
            <person name="Johnson A."/>
            <person name="Chen E."/>
            <person name="Marra M.A."/>
            <person name="Martienssen R."/>
            <person name="McCombie W.R."/>
        </authorList>
    </citation>
    <scope>NUCLEOTIDE SEQUENCE [LARGE SCALE GENOMIC DNA]</scope>
    <source>
        <strain>cv. Columbia</strain>
    </source>
</reference>
<reference key="2">
    <citation type="journal article" date="2017" name="Plant J.">
        <title>Araport11: a complete reannotation of the Arabidopsis thaliana reference genome.</title>
        <authorList>
            <person name="Cheng C.Y."/>
            <person name="Krishnakumar V."/>
            <person name="Chan A.P."/>
            <person name="Thibaud-Nissen F."/>
            <person name="Schobel S."/>
            <person name="Town C.D."/>
        </authorList>
    </citation>
    <scope>GENOME REANNOTATION</scope>
    <source>
        <strain>cv. Columbia</strain>
    </source>
</reference>
<reference key="3">
    <citation type="submission" date="2008-06" db="EMBL/GenBank/DDBJ databases">
        <title>Arabidopsis ORF clones.</title>
        <authorList>
            <person name="de los Reyes C."/>
            <person name="Quan R."/>
            <person name="Chen H."/>
            <person name="Bautista V."/>
            <person name="Kim C.J."/>
            <person name="Ecker J.R."/>
        </authorList>
    </citation>
    <scope>NUCLEOTIDE SEQUENCE [LARGE SCALE MRNA]</scope>
    <source>
        <strain>cv. Columbia</strain>
    </source>
</reference>
<reference key="4">
    <citation type="journal article" date="2007" name="J. Biol. Chem.">
        <title>Cytosolic hydroxymethyldihydropterin pyrophosphokinase/dihydropteroate synthase from Arabidopsis thaliana: a specific role in early development and stress response.</title>
        <authorList>
            <person name="Storozhenko S."/>
            <person name="Navarrete O."/>
            <person name="Ravanel S."/>
            <person name="De Brouwer V."/>
            <person name="Chaerle P."/>
            <person name="Zhang G.F."/>
            <person name="Bastien O."/>
            <person name="Lambert W."/>
            <person name="Rebeille F."/>
            <person name="Van Der Straeten D."/>
        </authorList>
    </citation>
    <scope>IDENTIFICATION</scope>
    <scope>TISSUE SPECIFICITY</scope>
    <scope>INDUCTION BY SALT STRESS</scope>
    <source>
        <strain>cv. Columbia</strain>
    </source>
</reference>
<organism evidence="11">
    <name type="scientific">Arabidopsis thaliana</name>
    <name type="common">Mouse-ear cress</name>
    <dbReference type="NCBI Taxonomy" id="3702"/>
    <lineage>
        <taxon>Eukaryota</taxon>
        <taxon>Viridiplantae</taxon>
        <taxon>Streptophyta</taxon>
        <taxon>Embryophyta</taxon>
        <taxon>Tracheophyta</taxon>
        <taxon>Spermatophyta</taxon>
        <taxon>Magnoliopsida</taxon>
        <taxon>eudicotyledons</taxon>
        <taxon>Gunneridae</taxon>
        <taxon>Pentapetalae</taxon>
        <taxon>rosids</taxon>
        <taxon>malvids</taxon>
        <taxon>Brassicales</taxon>
        <taxon>Brassicaceae</taxon>
        <taxon>Camelineae</taxon>
        <taxon>Arabidopsis</taxon>
    </lineage>
</organism>
<dbReference type="EC" id="2.7.6.3" evidence="1"/>
<dbReference type="EC" id="2.5.1.15" evidence="1"/>
<dbReference type="EMBL" id="AL078464">
    <property type="protein sequence ID" value="CAB43835.1"/>
    <property type="molecule type" value="Genomic_DNA"/>
</dbReference>
<dbReference type="EMBL" id="AL161576">
    <property type="protein sequence ID" value="CAB80993.1"/>
    <property type="molecule type" value="Genomic_DNA"/>
</dbReference>
<dbReference type="EMBL" id="CP002687">
    <property type="protein sequence ID" value="AEE85706.1"/>
    <property type="molecule type" value="Genomic_DNA"/>
</dbReference>
<dbReference type="EMBL" id="CP002687">
    <property type="protein sequence ID" value="AEE85707.1"/>
    <property type="molecule type" value="Genomic_DNA"/>
</dbReference>
<dbReference type="EMBL" id="BT033093">
    <property type="protein sequence ID" value="ACF06123.1"/>
    <property type="molecule type" value="mRNA"/>
</dbReference>
<dbReference type="PIR" id="T08976">
    <property type="entry name" value="T08976"/>
</dbReference>
<dbReference type="RefSeq" id="NP_001190868.1">
    <molecule id="Q9SZV3-2"/>
    <property type="nucleotide sequence ID" value="NM_001203939.1"/>
</dbReference>
<dbReference type="RefSeq" id="NP_194729.1">
    <molecule id="Q9SZV3-1"/>
    <property type="nucleotide sequence ID" value="NM_119146.3"/>
</dbReference>
<dbReference type="SMR" id="Q9SZV3"/>
<dbReference type="FunCoup" id="Q9SZV3">
    <property type="interactions" value="1258"/>
</dbReference>
<dbReference type="STRING" id="3702.Q9SZV3"/>
<dbReference type="PaxDb" id="3702-AT4G30000.2"/>
<dbReference type="ProteomicsDB" id="230608">
    <molecule id="Q9SZV3-1"/>
</dbReference>
<dbReference type="EnsemblPlants" id="AT4G30000.1">
    <molecule id="Q9SZV3-1"/>
    <property type="protein sequence ID" value="AT4G30000.1"/>
    <property type="gene ID" value="AT4G30000"/>
</dbReference>
<dbReference type="EnsemblPlants" id="AT4G30000.2">
    <molecule id="Q9SZV3-2"/>
    <property type="protein sequence ID" value="AT4G30000.2"/>
    <property type="gene ID" value="AT4G30000"/>
</dbReference>
<dbReference type="GeneID" id="829123"/>
<dbReference type="Gramene" id="AT4G30000.1">
    <molecule id="Q9SZV3-1"/>
    <property type="protein sequence ID" value="AT4G30000.1"/>
    <property type="gene ID" value="AT4G30000"/>
</dbReference>
<dbReference type="Gramene" id="AT4G30000.2">
    <molecule id="Q9SZV3-2"/>
    <property type="protein sequence ID" value="AT4G30000.2"/>
    <property type="gene ID" value="AT4G30000"/>
</dbReference>
<dbReference type="KEGG" id="ath:AT4G30000"/>
<dbReference type="Araport" id="AT4G30000"/>
<dbReference type="TAIR" id="AT4G30000"/>
<dbReference type="eggNOG" id="KOG2544">
    <property type="taxonomic scope" value="Eukaryota"/>
</dbReference>
<dbReference type="HOGENOM" id="CLU_008023_2_1_1"/>
<dbReference type="InParanoid" id="Q9SZV3"/>
<dbReference type="OMA" id="NIPHKLM"/>
<dbReference type="OrthoDB" id="615426at2759"/>
<dbReference type="PhylomeDB" id="Q9SZV3"/>
<dbReference type="BioCyc" id="ARA:AT4G30000-MONOMER"/>
<dbReference type="UniPathway" id="UPA00077">
    <property type="reaction ID" value="UER00155"/>
</dbReference>
<dbReference type="UniPathway" id="UPA00077">
    <property type="reaction ID" value="UER00156"/>
</dbReference>
<dbReference type="PRO" id="PR:Q9SZV3"/>
<dbReference type="Proteomes" id="UP000006548">
    <property type="component" value="Chromosome 4"/>
</dbReference>
<dbReference type="ExpressionAtlas" id="Q9SZV3">
    <property type="expression patterns" value="baseline and differential"/>
</dbReference>
<dbReference type="GO" id="GO:0005739">
    <property type="term" value="C:mitochondrion"/>
    <property type="evidence" value="ECO:0007669"/>
    <property type="project" value="UniProtKB-SubCell"/>
</dbReference>
<dbReference type="GO" id="GO:0005886">
    <property type="term" value="C:plasma membrane"/>
    <property type="evidence" value="ECO:0007005"/>
    <property type="project" value="TAIR"/>
</dbReference>
<dbReference type="GO" id="GO:0003848">
    <property type="term" value="F:2-amino-4-hydroxy-6-hydroxymethyldihydropteridine diphosphokinase activity"/>
    <property type="evidence" value="ECO:0007669"/>
    <property type="project" value="UniProtKB-EC"/>
</dbReference>
<dbReference type="GO" id="GO:0005524">
    <property type="term" value="F:ATP binding"/>
    <property type="evidence" value="ECO:0007669"/>
    <property type="project" value="UniProtKB-KW"/>
</dbReference>
<dbReference type="GO" id="GO:0004156">
    <property type="term" value="F:dihydropteroate synthase activity"/>
    <property type="evidence" value="ECO:0007669"/>
    <property type="project" value="UniProtKB-EC"/>
</dbReference>
<dbReference type="GO" id="GO:0016301">
    <property type="term" value="F:kinase activity"/>
    <property type="evidence" value="ECO:0007669"/>
    <property type="project" value="UniProtKB-KW"/>
</dbReference>
<dbReference type="GO" id="GO:0046872">
    <property type="term" value="F:metal ion binding"/>
    <property type="evidence" value="ECO:0007669"/>
    <property type="project" value="UniProtKB-KW"/>
</dbReference>
<dbReference type="GO" id="GO:0046656">
    <property type="term" value="P:folic acid biosynthetic process"/>
    <property type="evidence" value="ECO:0007669"/>
    <property type="project" value="UniProtKB-KW"/>
</dbReference>
<dbReference type="GO" id="GO:0046654">
    <property type="term" value="P:tetrahydrofolate biosynthetic process"/>
    <property type="evidence" value="ECO:0007669"/>
    <property type="project" value="UniProtKB-UniPathway"/>
</dbReference>
<dbReference type="CDD" id="cd00739">
    <property type="entry name" value="DHPS"/>
    <property type="match status" value="1"/>
</dbReference>
<dbReference type="CDD" id="cd00483">
    <property type="entry name" value="HPPK"/>
    <property type="match status" value="1"/>
</dbReference>
<dbReference type="FunFam" id="3.20.20.20:FF:000006">
    <property type="entry name" value="Dihydropteroate synthase"/>
    <property type="match status" value="1"/>
</dbReference>
<dbReference type="FunFam" id="3.30.70.560:FF:000003">
    <property type="entry name" value="Folate synthesis bifunctional protein"/>
    <property type="match status" value="1"/>
</dbReference>
<dbReference type="Gene3D" id="3.30.70.560">
    <property type="entry name" value="7,8-Dihydro-6-hydroxymethylpterin-pyrophosphokinase HPPK"/>
    <property type="match status" value="1"/>
</dbReference>
<dbReference type="Gene3D" id="3.20.20.20">
    <property type="entry name" value="Dihydropteroate synthase-like"/>
    <property type="match status" value="1"/>
</dbReference>
<dbReference type="InterPro" id="IPR045031">
    <property type="entry name" value="DHP_synth-like"/>
</dbReference>
<dbReference type="InterPro" id="IPR006390">
    <property type="entry name" value="DHP_synth_dom"/>
</dbReference>
<dbReference type="InterPro" id="IPR011005">
    <property type="entry name" value="Dihydropteroate_synth-like_sf"/>
</dbReference>
<dbReference type="InterPro" id="IPR000550">
    <property type="entry name" value="Hppk"/>
</dbReference>
<dbReference type="InterPro" id="IPR035907">
    <property type="entry name" value="Hppk_sf"/>
</dbReference>
<dbReference type="InterPro" id="IPR000489">
    <property type="entry name" value="Pterin-binding_dom"/>
</dbReference>
<dbReference type="NCBIfam" id="TIGR01496">
    <property type="entry name" value="DHPS"/>
    <property type="match status" value="1"/>
</dbReference>
<dbReference type="NCBIfam" id="TIGR01498">
    <property type="entry name" value="folK"/>
    <property type="match status" value="1"/>
</dbReference>
<dbReference type="PANTHER" id="PTHR20941">
    <property type="entry name" value="FOLATE SYNTHESIS PROTEINS"/>
    <property type="match status" value="1"/>
</dbReference>
<dbReference type="PANTHER" id="PTHR20941:SF1">
    <property type="entry name" value="FOLIC ACID SYNTHESIS PROTEIN FOL1"/>
    <property type="match status" value="1"/>
</dbReference>
<dbReference type="Pfam" id="PF01288">
    <property type="entry name" value="HPPK"/>
    <property type="match status" value="1"/>
</dbReference>
<dbReference type="Pfam" id="PF00809">
    <property type="entry name" value="Pterin_bind"/>
    <property type="match status" value="1"/>
</dbReference>
<dbReference type="SUPFAM" id="SSF55083">
    <property type="entry name" value="6-hydroxymethyl-7,8-dihydropterin pyrophosphokinase, HPPK"/>
    <property type="match status" value="1"/>
</dbReference>
<dbReference type="SUPFAM" id="SSF51717">
    <property type="entry name" value="Dihydropteroate synthetase-like"/>
    <property type="match status" value="1"/>
</dbReference>
<dbReference type="PROSITE" id="PS00792">
    <property type="entry name" value="DHPS_1"/>
    <property type="match status" value="1"/>
</dbReference>
<dbReference type="PROSITE" id="PS00793">
    <property type="entry name" value="DHPS_2"/>
    <property type="match status" value="1"/>
</dbReference>
<dbReference type="PROSITE" id="PS00794">
    <property type="entry name" value="HPPK"/>
    <property type="match status" value="1"/>
</dbReference>
<dbReference type="PROSITE" id="PS50972">
    <property type="entry name" value="PTERIN_BINDING"/>
    <property type="match status" value="1"/>
</dbReference>
<sequence length="554" mass="60738">MAPLLSQTLIHTGRFLLRRFLEPPPAVISAVAASRVCFHRYYSSKSLSLVSPLGLHCSSLFSPPALCNSAFSSSATSTTIEVQSTEHEVVIALGSNIGNRMNNFREALRLMKRGGICVTRHSCLYETAPVHVTDQPRFLNAAVRGVTKLGPHELLSVLKTIERDMGRKDGIRYGPRPLDLDILFYGKMRISSDKLIIPHERLWERSFVLAPLVDLLGSAVDNDTVAHWHSLAIHPGGIFQAWERLGGESLIGQDGIQRVLPIGDKLWDFSNKTHVMGILNLTPDSFSDGGKFQSIDSAVSRVRSMISEGADIIDIGAQSTRPMASRISSQEELDRLLPVLEAVRGMPEMEEKLISVDTFNSEVASEAISNGADILNDVSAGTLDPNMHKVVAESGVPYMAMHMRGDPCTMQNKENLQYDDVCKDVASELYLRVRDAELSGIPAWRVMIDPGIGFSKSVDHNLDIIMDLPKIREEMAKRSIAVSHAPILVGPSRKRFLGDICGRPEATDRDAATVASVTAGILGGANIIRVHNVRHNADAAKVCDAMLRRRRSKG</sequence>
<keyword id="KW-0025">Alternative splicing</keyword>
<keyword id="KW-0067">ATP-binding</keyword>
<keyword id="KW-0289">Folate biosynthesis</keyword>
<keyword id="KW-0418">Kinase</keyword>
<keyword id="KW-0460">Magnesium</keyword>
<keyword id="KW-0479">Metal-binding</keyword>
<keyword id="KW-0496">Mitochondrion</keyword>
<keyword id="KW-0511">Multifunctional enzyme</keyword>
<keyword id="KW-0547">Nucleotide-binding</keyword>
<keyword id="KW-1185">Reference proteome</keyword>
<keyword id="KW-0808">Transferase</keyword>
<keyword id="KW-0809">Transit peptide</keyword>
<evidence type="ECO:0000250" key="1">
    <source>
        <dbReference type="UniProtKB" id="O04862"/>
    </source>
</evidence>
<evidence type="ECO:0000250" key="2">
    <source>
        <dbReference type="UniProtKB" id="P0AC13"/>
    </source>
</evidence>
<evidence type="ECO:0000250" key="3">
    <source>
        <dbReference type="UniProtKB" id="P9WND1"/>
    </source>
</evidence>
<evidence type="ECO:0000255" key="4"/>
<evidence type="ECO:0000255" key="5">
    <source>
        <dbReference type="PROSITE-ProRule" id="PRU00334"/>
    </source>
</evidence>
<evidence type="ECO:0000269" key="6">
    <source>
    </source>
</evidence>
<evidence type="ECO:0000303" key="7">
    <source>
    </source>
</evidence>
<evidence type="ECO:0000305" key="8"/>
<evidence type="ECO:0000312" key="9">
    <source>
        <dbReference type="Araport" id="AT4G30000"/>
    </source>
</evidence>
<evidence type="ECO:0000312" key="10">
    <source>
        <dbReference type="EMBL" id="CAB43835.1"/>
    </source>
</evidence>
<evidence type="ECO:0000312" key="11">
    <source>
        <dbReference type="Proteomes" id="UP000006548"/>
    </source>
</evidence>
<feature type="transit peptide" description="Mitochondrion" evidence="4">
    <location>
        <begin position="1"/>
        <end position="42"/>
    </location>
</feature>
<feature type="chain" id="PRO_0000432868" description="Folate synthesis bifunctional protein, mitochondrial">
    <location>
        <begin position="43"/>
        <end position="554"/>
    </location>
</feature>
<feature type="domain" description="Pterin-binding" evidence="5">
    <location>
        <begin position="273"/>
        <end position="541"/>
    </location>
</feature>
<feature type="region of interest" description="HPPK" evidence="8">
    <location>
        <begin position="90"/>
        <end position="215"/>
    </location>
</feature>
<feature type="region of interest" description="DHPS">
    <location>
        <begin position="275"/>
        <end position="554"/>
    </location>
</feature>
<feature type="binding site" evidence="3">
    <location>
        <position position="280"/>
    </location>
    <ligand>
        <name>Mg(2+)</name>
        <dbReference type="ChEBI" id="CHEBI:18420"/>
    </ligand>
</feature>
<feature type="binding site" evidence="2">
    <location>
        <position position="320"/>
    </location>
    <ligand>
        <name>(7,8-dihydropterin-6-yl)methyl diphosphate</name>
        <dbReference type="ChEBI" id="CHEBI:72950"/>
    </ligand>
</feature>
<feature type="binding site" evidence="2">
    <location>
        <position position="357"/>
    </location>
    <ligand>
        <name>(7,8-dihydropterin-6-yl)methyl diphosphate</name>
        <dbReference type="ChEBI" id="CHEBI:72950"/>
    </ligand>
</feature>
<feature type="binding site" evidence="2">
    <location>
        <position position="376"/>
    </location>
    <ligand>
        <name>(7,8-dihydropterin-6-yl)methyl diphosphate</name>
        <dbReference type="ChEBI" id="CHEBI:72950"/>
    </ligand>
</feature>
<feature type="binding site" evidence="2">
    <location>
        <position position="449"/>
    </location>
    <ligand>
        <name>(7,8-dihydropterin-6-yl)methyl diphosphate</name>
        <dbReference type="ChEBI" id="CHEBI:72950"/>
    </ligand>
</feature>
<feature type="binding site" evidence="2">
    <location>
        <position position="494"/>
    </location>
    <ligand>
        <name>(7,8-dihydropterin-6-yl)methyl diphosphate</name>
        <dbReference type="ChEBI" id="CHEBI:72950"/>
    </ligand>
</feature>
<feature type="binding site" evidence="2">
    <location>
        <begin position="529"/>
        <end position="531"/>
    </location>
    <ligand>
        <name>(7,8-dihydropterin-6-yl)methyl diphosphate</name>
        <dbReference type="ChEBI" id="CHEBI:72950"/>
    </ligand>
</feature>
<feature type="splice variant" id="VSP_057628" description="In isoform 2.">
    <original>VCDAMLRRRRSKG</original>
    <variation>IDTAVSLCKNNMPREATFLL</variation>
    <location>
        <begin position="542"/>
        <end position="554"/>
    </location>
</feature>
<proteinExistence type="evidence at transcript level"/>
<comment type="function">
    <text evidence="1">Catalyzes the first two consecutive steps of tetrahydrofolate biosynthesis.</text>
</comment>
<comment type="catalytic activity">
    <reaction evidence="1">
        <text>6-hydroxymethyl-7,8-dihydropterin + ATP = (7,8-dihydropterin-6-yl)methyl diphosphate + AMP + H(+)</text>
        <dbReference type="Rhea" id="RHEA:11412"/>
        <dbReference type="ChEBI" id="CHEBI:15378"/>
        <dbReference type="ChEBI" id="CHEBI:30616"/>
        <dbReference type="ChEBI" id="CHEBI:44841"/>
        <dbReference type="ChEBI" id="CHEBI:72950"/>
        <dbReference type="ChEBI" id="CHEBI:456215"/>
        <dbReference type="EC" id="2.7.6.3"/>
    </reaction>
</comment>
<comment type="catalytic activity">
    <reaction evidence="1">
        <text>(7,8-dihydropterin-6-yl)methyl diphosphate + 4-aminobenzoate = 7,8-dihydropteroate + diphosphate</text>
        <dbReference type="Rhea" id="RHEA:19949"/>
        <dbReference type="ChEBI" id="CHEBI:17836"/>
        <dbReference type="ChEBI" id="CHEBI:17839"/>
        <dbReference type="ChEBI" id="CHEBI:33019"/>
        <dbReference type="ChEBI" id="CHEBI:72950"/>
        <dbReference type="EC" id="2.5.1.15"/>
    </reaction>
</comment>
<comment type="cofactor">
    <cofactor evidence="2">
        <name>Mg(2+)</name>
        <dbReference type="ChEBI" id="CHEBI:18420"/>
    </cofactor>
</comment>
<comment type="pathway">
    <text evidence="8">Cofactor biosynthesis; tetrahydrofolate biosynthesis; 2-amino-4-hydroxy-6-hydroxymethyl-7,8-dihydropteridine diphosphate from 7,8-dihydroneopterin triphosphate: step 4/4.</text>
</comment>
<comment type="pathway">
    <text evidence="8">Cofactor biosynthesis; tetrahydrofolate biosynthesis; 7,8-dihydrofolate from 2-amino-4-hydroxy-6-hydroxymethyl-7,8-dihydropteridine diphosphate and 4-aminobenzoate: step 1/2.</text>
</comment>
<comment type="subcellular location">
    <subcellularLocation>
        <location evidence="1">Mitochondrion</location>
    </subcellularLocation>
</comment>
<comment type="alternative products">
    <event type="alternative splicing"/>
    <isoform>
        <id>Q9SZV3-1</id>
        <name>1</name>
        <sequence type="displayed"/>
    </isoform>
    <isoform>
        <id>Q9SZV3-2</id>
        <name>2</name>
        <sequence type="described" ref="VSP_057628"/>
    </isoform>
</comment>
<comment type="tissue specificity">
    <text evidence="6">Ubiquitous.</text>
</comment>
<comment type="induction">
    <text evidence="6">Not induced by salt stress.</text>
</comment>
<comment type="similarity">
    <text evidence="8">In the N-terminal section; belongs to the HPPK family.</text>
</comment>
<comment type="similarity">
    <text evidence="8">In the C-terminal section; belongs to the DHPS family.</text>
</comment>